<organism>
    <name type="scientific">Corynebacterium jeikeium (strain K411)</name>
    <dbReference type="NCBI Taxonomy" id="306537"/>
    <lineage>
        <taxon>Bacteria</taxon>
        <taxon>Bacillati</taxon>
        <taxon>Actinomycetota</taxon>
        <taxon>Actinomycetes</taxon>
        <taxon>Mycobacteriales</taxon>
        <taxon>Corynebacteriaceae</taxon>
        <taxon>Corynebacterium</taxon>
    </lineage>
</organism>
<comment type="function">
    <text evidence="1">One of two assembly initiator proteins, it binds directly to the 5'-end of the 23S rRNA, where it nucleates assembly of the 50S subunit.</text>
</comment>
<comment type="function">
    <text evidence="1">One of the proteins that surrounds the polypeptide exit tunnel on the outside of the subunit.</text>
</comment>
<comment type="subunit">
    <text evidence="1">Part of the 50S ribosomal subunit.</text>
</comment>
<comment type="similarity">
    <text evidence="1">Belongs to the universal ribosomal protein uL24 family.</text>
</comment>
<sequence length="104" mass="11294">MKIRKGDTVLVISGPDKGAKGKVIEAYPQRDKVLVEGVNRIKKHVANSAPERGAESGGIVTQEAPIHVSNVMVVDSDGNPTRIGYRFDEDGKKIRVSKRNGKDI</sequence>
<accession>Q4JT80</accession>
<reference key="1">
    <citation type="journal article" date="2005" name="J. Bacteriol.">
        <title>Complete genome sequence and analysis of the multiresistant nosocomial pathogen Corynebacterium jeikeium K411, a lipid-requiring bacterium of the human skin flora.</title>
        <authorList>
            <person name="Tauch A."/>
            <person name="Kaiser O."/>
            <person name="Hain T."/>
            <person name="Goesmann A."/>
            <person name="Weisshaar B."/>
            <person name="Albersmeier A."/>
            <person name="Bekel T."/>
            <person name="Bischoff N."/>
            <person name="Brune I."/>
            <person name="Chakraborty T."/>
            <person name="Kalinowski J."/>
            <person name="Meyer F."/>
            <person name="Rupp O."/>
            <person name="Schneiker S."/>
            <person name="Viehoever P."/>
            <person name="Puehler A."/>
        </authorList>
    </citation>
    <scope>NUCLEOTIDE SEQUENCE [LARGE SCALE GENOMIC DNA]</scope>
    <source>
        <strain>K411</strain>
    </source>
</reference>
<proteinExistence type="inferred from homology"/>
<dbReference type="EMBL" id="CR931997">
    <property type="protein sequence ID" value="CAI37977.1"/>
    <property type="molecule type" value="Genomic_DNA"/>
</dbReference>
<dbReference type="RefSeq" id="WP_005291939.1">
    <property type="nucleotide sequence ID" value="NC_007164.1"/>
</dbReference>
<dbReference type="SMR" id="Q4JT80"/>
<dbReference type="STRING" id="306537.jk1800"/>
<dbReference type="GeneID" id="92739439"/>
<dbReference type="KEGG" id="cjk:jk1800"/>
<dbReference type="eggNOG" id="COG0198">
    <property type="taxonomic scope" value="Bacteria"/>
</dbReference>
<dbReference type="HOGENOM" id="CLU_093315_2_0_11"/>
<dbReference type="OrthoDB" id="9807419at2"/>
<dbReference type="Proteomes" id="UP000000545">
    <property type="component" value="Chromosome"/>
</dbReference>
<dbReference type="GO" id="GO:1990904">
    <property type="term" value="C:ribonucleoprotein complex"/>
    <property type="evidence" value="ECO:0007669"/>
    <property type="project" value="UniProtKB-KW"/>
</dbReference>
<dbReference type="GO" id="GO:0005840">
    <property type="term" value="C:ribosome"/>
    <property type="evidence" value="ECO:0007669"/>
    <property type="project" value="UniProtKB-KW"/>
</dbReference>
<dbReference type="GO" id="GO:0019843">
    <property type="term" value="F:rRNA binding"/>
    <property type="evidence" value="ECO:0007669"/>
    <property type="project" value="UniProtKB-UniRule"/>
</dbReference>
<dbReference type="GO" id="GO:0003735">
    <property type="term" value="F:structural constituent of ribosome"/>
    <property type="evidence" value="ECO:0007669"/>
    <property type="project" value="InterPro"/>
</dbReference>
<dbReference type="GO" id="GO:0006412">
    <property type="term" value="P:translation"/>
    <property type="evidence" value="ECO:0007669"/>
    <property type="project" value="UniProtKB-UniRule"/>
</dbReference>
<dbReference type="CDD" id="cd06089">
    <property type="entry name" value="KOW_RPL26"/>
    <property type="match status" value="1"/>
</dbReference>
<dbReference type="FunFam" id="2.30.30.30:FF:000004">
    <property type="entry name" value="50S ribosomal protein L24"/>
    <property type="match status" value="1"/>
</dbReference>
<dbReference type="Gene3D" id="2.30.30.30">
    <property type="match status" value="1"/>
</dbReference>
<dbReference type="HAMAP" id="MF_01326_B">
    <property type="entry name" value="Ribosomal_uL24_B"/>
    <property type="match status" value="1"/>
</dbReference>
<dbReference type="InterPro" id="IPR005824">
    <property type="entry name" value="KOW"/>
</dbReference>
<dbReference type="InterPro" id="IPR014722">
    <property type="entry name" value="Rib_uL2_dom2"/>
</dbReference>
<dbReference type="InterPro" id="IPR003256">
    <property type="entry name" value="Ribosomal_uL24"/>
</dbReference>
<dbReference type="InterPro" id="IPR005825">
    <property type="entry name" value="Ribosomal_uL24_CS"/>
</dbReference>
<dbReference type="InterPro" id="IPR041988">
    <property type="entry name" value="Ribosomal_uL24_KOW"/>
</dbReference>
<dbReference type="InterPro" id="IPR008991">
    <property type="entry name" value="Translation_prot_SH3-like_sf"/>
</dbReference>
<dbReference type="NCBIfam" id="TIGR01079">
    <property type="entry name" value="rplX_bact"/>
    <property type="match status" value="1"/>
</dbReference>
<dbReference type="PANTHER" id="PTHR12903">
    <property type="entry name" value="MITOCHONDRIAL RIBOSOMAL PROTEIN L24"/>
    <property type="match status" value="1"/>
</dbReference>
<dbReference type="Pfam" id="PF00467">
    <property type="entry name" value="KOW"/>
    <property type="match status" value="1"/>
</dbReference>
<dbReference type="Pfam" id="PF17136">
    <property type="entry name" value="ribosomal_L24"/>
    <property type="match status" value="1"/>
</dbReference>
<dbReference type="SMART" id="SM00739">
    <property type="entry name" value="KOW"/>
    <property type="match status" value="1"/>
</dbReference>
<dbReference type="SUPFAM" id="SSF50104">
    <property type="entry name" value="Translation proteins SH3-like domain"/>
    <property type="match status" value="1"/>
</dbReference>
<dbReference type="PROSITE" id="PS01108">
    <property type="entry name" value="RIBOSOMAL_L24"/>
    <property type="match status" value="1"/>
</dbReference>
<keyword id="KW-1185">Reference proteome</keyword>
<keyword id="KW-0687">Ribonucleoprotein</keyword>
<keyword id="KW-0689">Ribosomal protein</keyword>
<keyword id="KW-0694">RNA-binding</keyword>
<keyword id="KW-0699">rRNA-binding</keyword>
<protein>
    <recommendedName>
        <fullName evidence="1">Large ribosomal subunit protein uL24</fullName>
    </recommendedName>
    <alternativeName>
        <fullName evidence="2">50S ribosomal protein L24</fullName>
    </alternativeName>
</protein>
<feature type="chain" id="PRO_0000241588" description="Large ribosomal subunit protein uL24">
    <location>
        <begin position="1"/>
        <end position="104"/>
    </location>
</feature>
<gene>
    <name evidence="1" type="primary">rplX</name>
    <name type="ordered locus">jk1800</name>
</gene>
<evidence type="ECO:0000255" key="1">
    <source>
        <dbReference type="HAMAP-Rule" id="MF_01326"/>
    </source>
</evidence>
<evidence type="ECO:0000305" key="2"/>
<name>RL24_CORJK</name>